<reference key="1">
    <citation type="journal article" date="2001" name="Proc. Natl. Acad. Sci. U.S.A.">
        <title>The complete genome of the crenarchaeon Sulfolobus solfataricus P2.</title>
        <authorList>
            <person name="She Q."/>
            <person name="Singh R.K."/>
            <person name="Confalonieri F."/>
            <person name="Zivanovic Y."/>
            <person name="Allard G."/>
            <person name="Awayez M.J."/>
            <person name="Chan-Weiher C.C.-Y."/>
            <person name="Clausen I.G."/>
            <person name="Curtis B.A."/>
            <person name="De Moors A."/>
            <person name="Erauso G."/>
            <person name="Fletcher C."/>
            <person name="Gordon P.M.K."/>
            <person name="Heikamp-de Jong I."/>
            <person name="Jeffries A.C."/>
            <person name="Kozera C.J."/>
            <person name="Medina N."/>
            <person name="Peng X."/>
            <person name="Thi-Ngoc H.P."/>
            <person name="Redder P."/>
            <person name="Schenk M.E."/>
            <person name="Theriault C."/>
            <person name="Tolstrup N."/>
            <person name="Charlebois R.L."/>
            <person name="Doolittle W.F."/>
            <person name="Duguet M."/>
            <person name="Gaasterland T."/>
            <person name="Garrett R.A."/>
            <person name="Ragan M.A."/>
            <person name="Sensen C.W."/>
            <person name="Van der Oost J."/>
        </authorList>
    </citation>
    <scope>NUCLEOTIDE SEQUENCE [LARGE SCALE GENOMIC DNA]</scope>
    <source>
        <strain>ATCC 35092 / DSM 1617 / JCM 11322 / P2</strain>
    </source>
</reference>
<reference key="2">
    <citation type="journal article" date="2012" name="Mol. Cell">
        <title>Structure and mechanism of the CMR complex for CRISPR-mediated antiviral immunity.</title>
        <authorList>
            <person name="Zhang J."/>
            <person name="Rouillon C."/>
            <person name="Kerou M."/>
            <person name="Reeks J."/>
            <person name="Brugger K."/>
            <person name="Graham S."/>
            <person name="Reimann J."/>
            <person name="Cannone G."/>
            <person name="Liu H."/>
            <person name="Albers S.V."/>
            <person name="Naismith J.H."/>
            <person name="Spagnolo L."/>
            <person name="White M.F."/>
        </authorList>
    </citation>
    <scope>IDENTIFICATION BY MASS SPECTROMETRY</scope>
    <scope>FUNCTION IN CMR COMPLEX</scope>
    <scope>SUBUNIT</scope>
    <scope>SUBCELLULAR LOCATION</scope>
    <source>
        <strain>ATCC 35092 / DSM 1617 / JCM 11322 / P2</strain>
    </source>
</reference>
<comment type="function">
    <text evidence="1 2">CRISPR (clustered regularly interspaced short palindromic repeat) is an adaptive immune system that provides protection against mobile genetic elements (viruses, transposable elements and conjugative plasmids). CRISPR clusters contain spacers, sequences complementary to antecedent mobile elements, and target invading nucleic acids. CRISPR clusters are transcribed and processed into CRISPR RNA (crRNA) (By similarity). The CMR complex degrades RNA complementary to the crRNA (target RNA) within UA dinucleotides, generating 3'-OH and 5'-phosphate ends. Activity is dependent on the 8 nt long 5' tag in the crRNA, an unpaired 3' flag on the target RNA, and is stimulated by ATP. Some cleavage of the guide crRNA can also be observed.</text>
</comment>
<comment type="cofactor">
    <cofactor evidence="1">
        <name>Ca(2+)</name>
        <dbReference type="ChEBI" id="CHEBI:29108"/>
    </cofactor>
    <text evidence="1">Binds 2 Ca(2+) per subunit.</text>
</comment>
<comment type="cofactor">
    <cofactor evidence="1">
        <name>Zn(2+)</name>
        <dbReference type="ChEBI" id="CHEBI:29105"/>
    </cofactor>
    <text evidence="1">Binds 1 Zn(2+) ion per subunit.</text>
</comment>
<comment type="subunit">
    <text evidence="2">Part of the CMR ribonucleoprotein complex, consisting of crRNA plus Cmr1/Cmr2/Cmr3/Cmr4/Cmr5/Cmr6 at 1:1 and possibly 3 Cmr7 dimers. A Cmr2/Cmr3/Cmr7 subcomplex without crRNA can also be isolated. It does not cleave target RNA.</text>
</comment>
<comment type="subcellular location">
    <subcellularLocation>
        <location evidence="2">Cytoplasm</location>
    </subcellularLocation>
</comment>
<comment type="similarity">
    <text evidence="3">Belongs to the CRISPR system Cmr2 family.</text>
</comment>
<dbReference type="EMBL" id="AE006641">
    <property type="protein sequence ID" value="AAK42181.1"/>
    <property type="molecule type" value="Genomic_DNA"/>
</dbReference>
<dbReference type="PIR" id="F90365">
    <property type="entry name" value="F90365"/>
</dbReference>
<dbReference type="SMR" id="Q97WX0"/>
<dbReference type="STRING" id="273057.SSO1991"/>
<dbReference type="PaxDb" id="273057-SSO1991"/>
<dbReference type="EnsemblBacteria" id="AAK42181">
    <property type="protein sequence ID" value="AAK42181"/>
    <property type="gene ID" value="SSO1991"/>
</dbReference>
<dbReference type="KEGG" id="sso:SSO1991"/>
<dbReference type="PATRIC" id="fig|273057.12.peg.2067"/>
<dbReference type="eggNOG" id="arCOG02666">
    <property type="taxonomic scope" value="Archaea"/>
</dbReference>
<dbReference type="HOGENOM" id="CLU_012640_0_0_2"/>
<dbReference type="InParanoid" id="Q97WX0"/>
<dbReference type="PhylomeDB" id="Q97WX0"/>
<dbReference type="Proteomes" id="UP000001974">
    <property type="component" value="Chromosome"/>
</dbReference>
<dbReference type="GO" id="GO:0005737">
    <property type="term" value="C:cytoplasm"/>
    <property type="evidence" value="ECO:0007669"/>
    <property type="project" value="UniProtKB-SubCell"/>
</dbReference>
<dbReference type="GO" id="GO:0046872">
    <property type="term" value="F:metal ion binding"/>
    <property type="evidence" value="ECO:0007669"/>
    <property type="project" value="UniProtKB-KW"/>
</dbReference>
<dbReference type="GO" id="GO:0000166">
    <property type="term" value="F:nucleotide binding"/>
    <property type="evidence" value="ECO:0007669"/>
    <property type="project" value="UniProtKB-KW"/>
</dbReference>
<dbReference type="GO" id="GO:0051607">
    <property type="term" value="P:defense response to virus"/>
    <property type="evidence" value="ECO:0007669"/>
    <property type="project" value="UniProtKB-KW"/>
</dbReference>
<dbReference type="Gene3D" id="3.30.70.270">
    <property type="match status" value="1"/>
</dbReference>
<dbReference type="Gene3D" id="3.30.70.2220">
    <property type="entry name" value="CRISPR-Cas system, Cmr2 subunit, D1 domain, cysteine cluster"/>
    <property type="match status" value="1"/>
</dbReference>
<dbReference type="InterPro" id="IPR054767">
    <property type="entry name" value="Cas10-Cmr2_palm2"/>
</dbReference>
<dbReference type="InterPro" id="IPR038242">
    <property type="entry name" value="Cmr2_N"/>
</dbReference>
<dbReference type="InterPro" id="IPR024615">
    <property type="entry name" value="CRISPR-assoc_Cmr2_N"/>
</dbReference>
<dbReference type="InterPro" id="IPR013407">
    <property type="entry name" value="CRISPR-assoc_prot_Cmr2"/>
</dbReference>
<dbReference type="InterPro" id="IPR043128">
    <property type="entry name" value="Rev_trsase/Diguanyl_cyclase"/>
</dbReference>
<dbReference type="NCBIfam" id="TIGR02577">
    <property type="entry name" value="cas_TM1794_Cmr2"/>
    <property type="match status" value="1"/>
</dbReference>
<dbReference type="Pfam" id="PF22335">
    <property type="entry name" value="Cas10-Cmr2_palm2"/>
    <property type="match status" value="1"/>
</dbReference>
<dbReference type="Pfam" id="PF12469">
    <property type="entry name" value="Cmr2_N"/>
    <property type="match status" value="1"/>
</dbReference>
<proteinExistence type="evidence at protein level"/>
<organism>
    <name type="scientific">Saccharolobus solfataricus (strain ATCC 35092 / DSM 1617 / JCM 11322 / P2)</name>
    <name type="common">Sulfolobus solfataricus</name>
    <dbReference type="NCBI Taxonomy" id="273057"/>
    <lineage>
        <taxon>Archaea</taxon>
        <taxon>Thermoproteota</taxon>
        <taxon>Thermoprotei</taxon>
        <taxon>Sulfolobales</taxon>
        <taxon>Sulfolobaceae</taxon>
        <taxon>Saccharolobus</taxon>
    </lineage>
</organism>
<feature type="chain" id="PRO_0000418074" description="CRISPR system CMR subunit Cmr2">
    <location>
        <begin position="1"/>
        <end position="1045"/>
    </location>
</feature>
<feature type="binding site" evidence="1">
    <location>
        <position position="229"/>
    </location>
    <ligand>
        <name>ADP</name>
        <dbReference type="ChEBI" id="CHEBI:456216"/>
    </ligand>
</feature>
<feature type="binding site" evidence="1">
    <location>
        <position position="233"/>
    </location>
    <ligand>
        <name>ADP</name>
        <dbReference type="ChEBI" id="CHEBI:456216"/>
    </ligand>
</feature>
<feature type="binding site" evidence="1">
    <location>
        <position position="466"/>
    </location>
    <ligand>
        <name>Zn(2+)</name>
        <dbReference type="ChEBI" id="CHEBI:29105"/>
    </ligand>
</feature>
<feature type="binding site" evidence="1">
    <location>
        <position position="469"/>
    </location>
    <ligand>
        <name>Zn(2+)</name>
        <dbReference type="ChEBI" id="CHEBI:29105"/>
    </ligand>
</feature>
<feature type="binding site" evidence="1">
    <location>
        <position position="514"/>
    </location>
    <ligand>
        <name>Zn(2+)</name>
        <dbReference type="ChEBI" id="CHEBI:29105"/>
    </ligand>
</feature>
<feature type="binding site" evidence="1">
    <location>
        <position position="517"/>
    </location>
    <ligand>
        <name>Zn(2+)</name>
        <dbReference type="ChEBI" id="CHEBI:29105"/>
    </ligand>
</feature>
<feature type="binding site" evidence="1">
    <location>
        <position position="652"/>
    </location>
    <ligand>
        <name>a divalent metal cation</name>
        <dbReference type="ChEBI" id="CHEBI:60240"/>
        <label>1</label>
    </ligand>
</feature>
<feature type="binding site" evidence="1">
    <location>
        <position position="810"/>
    </location>
    <ligand>
        <name>a divalent metal cation</name>
        <dbReference type="ChEBI" id="CHEBI:60240"/>
        <label>2</label>
    </ligand>
</feature>
<feature type="binding site" evidence="1">
    <location>
        <position position="811"/>
    </location>
    <ligand>
        <name>a divalent metal cation</name>
        <dbReference type="ChEBI" id="CHEBI:60240"/>
        <label>1</label>
    </ligand>
</feature>
<feature type="binding site" evidence="1">
    <location>
        <position position="811"/>
    </location>
    <ligand>
        <name>ADP</name>
        <dbReference type="ChEBI" id="CHEBI:456216"/>
    </ligand>
</feature>
<accession>Q97WX0</accession>
<evidence type="ECO:0000250" key="1"/>
<evidence type="ECO:0000269" key="2">
    <source>
    </source>
</evidence>
<evidence type="ECO:0000305" key="3"/>
<gene>
    <name type="primary">cmr2</name>
    <name type="ordered locus">SSO1991</name>
</gene>
<keyword id="KW-0051">Antiviral defense</keyword>
<keyword id="KW-0963">Cytoplasm</keyword>
<keyword id="KW-0479">Metal-binding</keyword>
<keyword id="KW-0547">Nucleotide-binding</keyword>
<keyword id="KW-1185">Reference proteome</keyword>
<keyword id="KW-0862">Zinc</keyword>
<protein>
    <recommendedName>
        <fullName>CRISPR system CMR subunit Cmr2</fullName>
    </recommendedName>
    <alternativeName>
        <fullName>CRISPR-associated protein Cas10/Cmr2, subtype III-B</fullName>
    </alternativeName>
</protein>
<name>CMR2_SACS2</name>
<sequence>MSTDDNSREEFLNYKIMALLHDPPNKAWVITSRAHNLTVQLRSVRARKSHERVAKYIINQLFGDINSKTVDNADKLASSIDRYLGSIVYKEYSLFRNRSIFLKNILLSNIQRDVGNLFPKDKSKLDNLISEYKKLLNVTNTTNLNILKYQLFYLIYELIWIDSRYENTPAETRNPTHTIFDHLYATAAMMNWIFSLEKEAKGYLLGIDTIGVADFISKGKKTRDLWISSYLVSALLWYVITWFIEEYGPDVILFPSLRFNQFYAFYLLEKLRKEKISEDVIDEIKELITKYIFNGDDLFEKLEIPPYPIIPGRITLILPGLIREGEEYTQVPDDNYFISKVKERYNEGWRKLIEGLKCYSELKREDGFWNLVCRVLKLTEDLLQTTPLNIRVKQVSVTKDEIFNNSKLRSDSWKIYDNKYRQLVSEFKKSKLVKVTPESRLKLFELTKFDKLPQIGEKSKRGYEFCTSCGVLPAVIIMPKEDEFEKKLIELGIARDEKDVRSIKNMISPGERLCPWCLVKRALGAEPRLMRILLLGDLCSVEKIVNEIVSKDVKIEIPSTSDIASIKTFEEMIEKKNEICEDLKEEEVCEKPNESMLSMWQRFNKNYYTGINLTIDPEEYWFSEKRRRYYFSLFRRHRITFPSPYYALVRADSDYLGDLLEGKLTPYLAGIIDSGDYANISEKKEEVNKLLEEYLVNAGSGPIVDYVKTVLECIRGNLNKCSCAVKIYSNEVAEVMFRANRLLRKKLEKIDVEREVENSLKYFRTILKEGRIIVTPAWHVSISSALNRGLLVELELINKHKGFVIYAGGDDLLAMLPVDEVLDFVKESRRAFAGVSTGRLGNMCLENGFARINNAYYPSLPIVGRSYSVIIAHYADPLFFVINDSYNLLEEGKEMIRYRVMYNGEYKDAKKDVAIFRYQGLTSVIPLSLKRPIVNSVSDFNEIASIIDLILELKKRIDEGHISVSLLYDYEEYKHLIVASDEKYLTEFLVKDWIKRNSLRKHVEFTIDEKLYGVRLTIENYPIKIPNDLISNIVYTLRIIYGGEK</sequence>